<proteinExistence type="evidence at protein level"/>
<organism>
    <name type="scientific">Escherichia coli (strain K12)</name>
    <dbReference type="NCBI Taxonomy" id="83333"/>
    <lineage>
        <taxon>Bacteria</taxon>
        <taxon>Pseudomonadati</taxon>
        <taxon>Pseudomonadota</taxon>
        <taxon>Gammaproteobacteria</taxon>
        <taxon>Enterobacterales</taxon>
        <taxon>Enterobacteriaceae</taxon>
        <taxon>Escherichia</taxon>
    </lineage>
</organism>
<comment type="function">
    <text evidence="3 4">Catalyzes the oxidation of 3-hydroxyadipyl-CoA to yield 3-oxoadipyl-CoA.</text>
</comment>
<comment type="catalytic activity">
    <reaction evidence="3">
        <text>(3S)-3-hydroxyadipyl-CoA + NAD(+) = 3-oxoadipyl-CoA + NADH + H(+)</text>
        <dbReference type="Rhea" id="RHEA:34851"/>
        <dbReference type="ChEBI" id="CHEBI:15378"/>
        <dbReference type="ChEBI" id="CHEBI:57348"/>
        <dbReference type="ChEBI" id="CHEBI:57540"/>
        <dbReference type="ChEBI" id="CHEBI:57945"/>
        <dbReference type="ChEBI" id="CHEBI:132183"/>
    </reaction>
</comment>
<comment type="pathway">
    <text evidence="2">Aromatic compound metabolism; phenylacetate degradation.</text>
</comment>
<comment type="subunit">
    <text evidence="6">Homotrimer.</text>
</comment>
<comment type="induction">
    <text evidence="1 4">Activated by cAMP receptor protein (CRP), integration host factor (IHF) and by phenylacetyl-coenzyme A (PA-CoA) that prevents PaaX from binding its target sequences. Inhibited by PaaX.</text>
</comment>
<comment type="disruption phenotype">
    <text evidence="2">Mutants accumulate 3-hydroxyadipate and are unable to use phenylacetate as a carbon source.</text>
</comment>
<comment type="similarity">
    <text evidence="6">Belongs to the 3-hydroxyacyl-CoA dehydrogenase family.</text>
</comment>
<name>PAAH_ECOLI</name>
<sequence>MMINVQTVAVIGSGTMGAGIAEVAASHGHQVLLYDISAEALTRAIDGIHARLNSRVTRGKLTAETCERTLKRLIPVTDIHALAAADLVIEAASERLEVKKALFAQLAEVCPPQTLLTTNTSSISITAIAAEIKNPERVAGLHFFNPAPVMKLVEVVSGLATAAEVVEQLCELTLSWGKQPVRCHSTPGFIVNRVARPYYSEAWRALEEQVAAPEVIDAALRDGAGFPMGPLELTDLIGQDVNFAVTCSVFNAFWQERRFLPSLVQQELVIGGRLGKKSGLGVYDWRAEREAVVGLEAVSDSFSPMKVEKKSDGVTEIDDVLLIETQGETAQALAIRLARPVVVIDKMAGKVVTIAAAAVNPDSATRKAIYYLQQQGKTVLQIADYPGMLIWRTVAMIINEALDALQKGVASEQDIDTAMRLGVNYPYGPLAWGAQLGWQRILRLLENLQHHYGEERYRPCSLLRQRALLESGYES</sequence>
<evidence type="ECO:0000269" key="1">
    <source>
    </source>
</evidence>
<evidence type="ECO:0000269" key="2">
    <source>
    </source>
</evidence>
<evidence type="ECO:0000269" key="3">
    <source>
    </source>
</evidence>
<evidence type="ECO:0000269" key="4">
    <source>
    </source>
</evidence>
<evidence type="ECO:0000303" key="5">
    <source>
    </source>
</evidence>
<evidence type="ECO:0000305" key="6"/>
<evidence type="ECO:0007829" key="7">
    <source>
        <dbReference type="PDB" id="3MOG"/>
    </source>
</evidence>
<gene>
    <name type="primary">paaH</name>
    <name type="synonym">ydbU</name>
    <name type="ordered locus">b1395</name>
    <name type="ordered locus">JW1390</name>
</gene>
<keyword id="KW-0002">3D-structure</keyword>
<keyword id="KW-0520">NAD</keyword>
<keyword id="KW-0560">Oxidoreductase</keyword>
<keyword id="KW-1185">Reference proteome</keyword>
<dbReference type="EC" id="1.1.1.-" evidence="3"/>
<dbReference type="EMBL" id="X97452">
    <property type="protein sequence ID" value="CAA66097.1"/>
    <property type="molecule type" value="Genomic_DNA"/>
</dbReference>
<dbReference type="EMBL" id="U00096">
    <property type="protein sequence ID" value="AAC74477.1"/>
    <property type="molecule type" value="Genomic_DNA"/>
</dbReference>
<dbReference type="EMBL" id="AP009048">
    <property type="protein sequence ID" value="BAA15001.2"/>
    <property type="molecule type" value="Genomic_DNA"/>
</dbReference>
<dbReference type="PIR" id="F64890">
    <property type="entry name" value="F64890"/>
</dbReference>
<dbReference type="RefSeq" id="NP_415913.1">
    <property type="nucleotide sequence ID" value="NC_000913.3"/>
</dbReference>
<dbReference type="RefSeq" id="WP_000973360.1">
    <property type="nucleotide sequence ID" value="NZ_SSZK01000012.1"/>
</dbReference>
<dbReference type="PDB" id="3MOG">
    <property type="method" value="X-ray"/>
    <property type="resolution" value="2.20 A"/>
    <property type="chains" value="A/B/C=4-475"/>
</dbReference>
<dbReference type="PDBsum" id="3MOG"/>
<dbReference type="SMR" id="P76083"/>
<dbReference type="BioGRID" id="4259599">
    <property type="interactions" value="407"/>
</dbReference>
<dbReference type="FunCoup" id="P76083">
    <property type="interactions" value="543"/>
</dbReference>
<dbReference type="IntAct" id="P76083">
    <property type="interactions" value="1"/>
</dbReference>
<dbReference type="STRING" id="511145.b1395"/>
<dbReference type="PaxDb" id="511145-b1395"/>
<dbReference type="DNASU" id="945940"/>
<dbReference type="EnsemblBacteria" id="AAC74477">
    <property type="protein sequence ID" value="AAC74477"/>
    <property type="gene ID" value="b1395"/>
</dbReference>
<dbReference type="GeneID" id="945940"/>
<dbReference type="KEGG" id="ecj:JW1390"/>
<dbReference type="KEGG" id="eco:b1395"/>
<dbReference type="KEGG" id="ecoc:C3026_08140"/>
<dbReference type="PATRIC" id="fig|511145.12.peg.1458"/>
<dbReference type="EchoBASE" id="EB3505"/>
<dbReference type="eggNOG" id="COG1250">
    <property type="taxonomic scope" value="Bacteria"/>
</dbReference>
<dbReference type="HOGENOM" id="CLU_009834_2_2_6"/>
<dbReference type="InParanoid" id="P76083"/>
<dbReference type="OMA" id="RAWGKTP"/>
<dbReference type="OrthoDB" id="5389341at2"/>
<dbReference type="PhylomeDB" id="P76083"/>
<dbReference type="BioCyc" id="EcoCyc:G6716-MONOMER"/>
<dbReference type="BioCyc" id="MetaCyc:G6716-MONOMER"/>
<dbReference type="UniPathway" id="UPA00930"/>
<dbReference type="EvolutionaryTrace" id="P76083"/>
<dbReference type="PRO" id="PR:P76083"/>
<dbReference type="Proteomes" id="UP000000625">
    <property type="component" value="Chromosome"/>
</dbReference>
<dbReference type="GO" id="GO:0003857">
    <property type="term" value="F:3-hydroxyacyl-CoA dehydrogenase activity"/>
    <property type="evidence" value="ECO:0000314"/>
    <property type="project" value="EcoCyc"/>
</dbReference>
<dbReference type="GO" id="GO:0008691">
    <property type="term" value="F:3-hydroxybutyryl-CoA dehydrogenase activity"/>
    <property type="evidence" value="ECO:0000314"/>
    <property type="project" value="UniProtKB"/>
</dbReference>
<dbReference type="GO" id="GO:0070403">
    <property type="term" value="F:NAD+ binding"/>
    <property type="evidence" value="ECO:0007669"/>
    <property type="project" value="InterPro"/>
</dbReference>
<dbReference type="GO" id="GO:0006635">
    <property type="term" value="P:fatty acid beta-oxidation"/>
    <property type="evidence" value="ECO:0000318"/>
    <property type="project" value="GO_Central"/>
</dbReference>
<dbReference type="GO" id="GO:0010124">
    <property type="term" value="P:phenylacetate catabolic process"/>
    <property type="evidence" value="ECO:0000315"/>
    <property type="project" value="UniProtKB"/>
</dbReference>
<dbReference type="FunFam" id="3.40.50.720:FF:000009">
    <property type="entry name" value="Fatty oxidation complex, alpha subunit"/>
    <property type="match status" value="1"/>
</dbReference>
<dbReference type="Gene3D" id="1.10.1040.50">
    <property type="match status" value="1"/>
</dbReference>
<dbReference type="Gene3D" id="3.30.750.190">
    <property type="match status" value="1"/>
</dbReference>
<dbReference type="Gene3D" id="3.40.50.720">
    <property type="entry name" value="NAD(P)-binding Rossmann-like Domain"/>
    <property type="match status" value="1"/>
</dbReference>
<dbReference type="InterPro" id="IPR006180">
    <property type="entry name" value="3-OHacyl-CoA_DH_CS"/>
</dbReference>
<dbReference type="InterPro" id="IPR006176">
    <property type="entry name" value="3-OHacyl-CoA_DH_NAD-bd"/>
</dbReference>
<dbReference type="InterPro" id="IPR011967">
    <property type="entry name" value="3-OHacyl-CoA_DH_PaaH"/>
</dbReference>
<dbReference type="InterPro" id="IPR006108">
    <property type="entry name" value="3HC_DH_C"/>
</dbReference>
<dbReference type="InterPro" id="IPR041040">
    <property type="entry name" value="3HCDH_RFF"/>
</dbReference>
<dbReference type="InterPro" id="IPR008927">
    <property type="entry name" value="6-PGluconate_DH-like_C_sf"/>
</dbReference>
<dbReference type="InterPro" id="IPR036291">
    <property type="entry name" value="NAD(P)-bd_dom_sf"/>
</dbReference>
<dbReference type="NCBIfam" id="TIGR02279">
    <property type="entry name" value="PaaC-3OHAcCoADH"/>
    <property type="match status" value="1"/>
</dbReference>
<dbReference type="PANTHER" id="PTHR48075">
    <property type="entry name" value="3-HYDROXYACYL-COA DEHYDROGENASE FAMILY PROTEIN"/>
    <property type="match status" value="1"/>
</dbReference>
<dbReference type="PANTHER" id="PTHR48075:SF5">
    <property type="entry name" value="3-HYDROXYBUTYRYL-COA DEHYDROGENASE"/>
    <property type="match status" value="1"/>
</dbReference>
<dbReference type="Pfam" id="PF00725">
    <property type="entry name" value="3HCDH"/>
    <property type="match status" value="2"/>
</dbReference>
<dbReference type="Pfam" id="PF02737">
    <property type="entry name" value="3HCDH_N"/>
    <property type="match status" value="1"/>
</dbReference>
<dbReference type="Pfam" id="PF18321">
    <property type="entry name" value="3HCDH_RFF"/>
    <property type="match status" value="1"/>
</dbReference>
<dbReference type="SUPFAM" id="SSF48179">
    <property type="entry name" value="6-phosphogluconate dehydrogenase C-terminal domain-like"/>
    <property type="match status" value="2"/>
</dbReference>
<dbReference type="SUPFAM" id="SSF51735">
    <property type="entry name" value="NAD(P)-binding Rossmann-fold domains"/>
    <property type="match status" value="1"/>
</dbReference>
<dbReference type="PROSITE" id="PS00067">
    <property type="entry name" value="3HCDH"/>
    <property type="match status" value="1"/>
</dbReference>
<protein>
    <recommendedName>
        <fullName evidence="5">3-hydroxyadipyl-CoA dehydrogenase</fullName>
        <ecNumber evidence="3">1.1.1.-</ecNumber>
    </recommendedName>
</protein>
<reference key="1">
    <citation type="journal article" date="1998" name="J. Biol. Chem.">
        <title>Catabolism of phenylacetic acid in Escherichia coli. Characterization of a new aerobic hybrid pathway.</title>
        <authorList>
            <person name="Ferrandez A."/>
            <person name="Minambres B."/>
            <person name="Garcia B."/>
            <person name="Olivera E.R."/>
            <person name="Luengo J.M."/>
            <person name="Garcia J.L."/>
            <person name="Diaz E."/>
        </authorList>
    </citation>
    <scope>NUCLEOTIDE SEQUENCE [GENOMIC DNA]</scope>
    <scope>FUNCTION IN PHENYLACETATE CATABOLISM</scope>
    <scope>INDUCTION</scope>
    <source>
        <strain>W / ATCC 11105 / DSM 1900</strain>
    </source>
</reference>
<reference key="2">
    <citation type="journal article" date="1996" name="DNA Res.">
        <title>A 570-kb DNA sequence of the Escherichia coli K-12 genome corresponding to the 28.0-40.1 min region on the linkage map.</title>
        <authorList>
            <person name="Aiba H."/>
            <person name="Baba T."/>
            <person name="Fujita K."/>
            <person name="Hayashi K."/>
            <person name="Inada T."/>
            <person name="Isono K."/>
            <person name="Itoh T."/>
            <person name="Kasai H."/>
            <person name="Kashimoto K."/>
            <person name="Kimura S."/>
            <person name="Kitakawa M."/>
            <person name="Kitagawa M."/>
            <person name="Makino K."/>
            <person name="Miki T."/>
            <person name="Mizobuchi K."/>
            <person name="Mori H."/>
            <person name="Mori T."/>
            <person name="Motomura K."/>
            <person name="Nakade S."/>
            <person name="Nakamura Y."/>
            <person name="Nashimoto H."/>
            <person name="Nishio Y."/>
            <person name="Oshima T."/>
            <person name="Saito N."/>
            <person name="Sampei G."/>
            <person name="Seki Y."/>
            <person name="Sivasundaram S."/>
            <person name="Tagami H."/>
            <person name="Takeda J."/>
            <person name="Takemoto K."/>
            <person name="Takeuchi Y."/>
            <person name="Wada C."/>
            <person name="Yamamoto Y."/>
            <person name="Horiuchi T."/>
        </authorList>
    </citation>
    <scope>NUCLEOTIDE SEQUENCE [LARGE SCALE GENOMIC DNA]</scope>
    <source>
        <strain>K12 / W3110 / ATCC 27325 / DSM 5911</strain>
    </source>
</reference>
<reference key="3">
    <citation type="journal article" date="1997" name="Science">
        <title>The complete genome sequence of Escherichia coli K-12.</title>
        <authorList>
            <person name="Blattner F.R."/>
            <person name="Plunkett G. III"/>
            <person name="Bloch C.A."/>
            <person name="Perna N.T."/>
            <person name="Burland V."/>
            <person name="Riley M."/>
            <person name="Collado-Vides J."/>
            <person name="Glasner J.D."/>
            <person name="Rode C.K."/>
            <person name="Mayhew G.F."/>
            <person name="Gregor J."/>
            <person name="Davis N.W."/>
            <person name="Kirkpatrick H.A."/>
            <person name="Goeden M.A."/>
            <person name="Rose D.J."/>
            <person name="Mau B."/>
            <person name="Shao Y."/>
        </authorList>
    </citation>
    <scope>NUCLEOTIDE SEQUENCE [LARGE SCALE GENOMIC DNA]</scope>
    <source>
        <strain>K12 / MG1655 / ATCC 47076</strain>
    </source>
</reference>
<reference key="4">
    <citation type="journal article" date="2006" name="Mol. Syst. Biol.">
        <title>Highly accurate genome sequences of Escherichia coli K-12 strains MG1655 and W3110.</title>
        <authorList>
            <person name="Hayashi K."/>
            <person name="Morooka N."/>
            <person name="Yamamoto Y."/>
            <person name="Fujita K."/>
            <person name="Isono K."/>
            <person name="Choi S."/>
            <person name="Ohtsubo E."/>
            <person name="Baba T."/>
            <person name="Wanner B.L."/>
            <person name="Mori H."/>
            <person name="Horiuchi T."/>
        </authorList>
    </citation>
    <scope>NUCLEOTIDE SEQUENCE [LARGE SCALE GENOMIC DNA]</scope>
    <source>
        <strain>K12 / W3110 / ATCC 27325 / DSM 5911</strain>
    </source>
</reference>
<reference key="5">
    <citation type="journal article" date="2000" name="J. Biol. Chem.">
        <title>Transcriptional regulation of the divergent paa catabolic operons for phenylacetic acid degradation in Escherichia coli.</title>
        <authorList>
            <person name="Ferrandez A."/>
            <person name="Garcia J.L."/>
            <person name="Diaz E."/>
        </authorList>
    </citation>
    <scope>TRANSCRIPTIONAL REGULATION</scope>
</reference>
<reference key="6">
    <citation type="journal article" date="2003" name="Eur. J. Biochem.">
        <title>Functional genomics by NMR spectroscopy. Phenylacetate catabolism in Escherichia coli.</title>
        <authorList>
            <person name="Ismail W."/>
            <person name="El-Said Mohamed M."/>
            <person name="Wanner B.L."/>
            <person name="Datsenko K.A."/>
            <person name="Eisenreich W."/>
            <person name="Rohdich F."/>
            <person name="Bacher A."/>
            <person name="Fuchs G."/>
        </authorList>
    </citation>
    <scope>DISRUPTION PHENOTYPE</scope>
    <scope>PATHWAY</scope>
</reference>
<reference key="7">
    <citation type="journal article" date="2010" name="Proc. Natl. Acad. Sci. U.S.A.">
        <title>Bacterial phenylalanine and phenylacetate catabolic pathway revealed.</title>
        <authorList>
            <person name="Teufel R."/>
            <person name="Mascaraque V."/>
            <person name="Ismail W."/>
            <person name="Voss M."/>
            <person name="Perera J."/>
            <person name="Eisenreich W."/>
            <person name="Haehnel W."/>
            <person name="Fuchs G."/>
        </authorList>
    </citation>
    <scope>FUNCTION</scope>
    <scope>CATALYTIC ACTIVITY</scope>
</reference>
<reference key="8">
    <citation type="submission" date="2010-06" db="PDB data bank">
        <title>Crystal structure of 3-hydroxybutyryl-CoA dehydrogenase from Escherichia coli K12.</title>
        <authorList>
            <consortium name="New York structural genomics research consortium (NYSGRC)"/>
        </authorList>
    </citation>
    <scope>X-RAY CRYSTALLOGRAPHY (2.2 ANGSTROMS) OF 4-475</scope>
    <scope>SUBUNIT</scope>
</reference>
<accession>P76083</accession>
<accession>O53016</accession>
<accession>P78289</accession>
<feature type="chain" id="PRO_0000109332" description="3-hydroxyadipyl-CoA dehydrogenase">
    <location>
        <begin position="1"/>
        <end position="475"/>
    </location>
</feature>
<feature type="sequence variant" description="In strain: W.">
    <original>I</original>
    <variation>V</variation>
    <location>
        <position position="132"/>
    </location>
</feature>
<feature type="sequence variant" description="In strain: W.">
    <original>I</original>
    <variation>V</variation>
    <location>
        <position position="344"/>
    </location>
</feature>
<feature type="strand" evidence="7">
    <location>
        <begin position="8"/>
        <end position="11"/>
    </location>
</feature>
<feature type="helix" evidence="7">
    <location>
        <begin position="15"/>
        <end position="26"/>
    </location>
</feature>
<feature type="strand" evidence="7">
    <location>
        <begin position="31"/>
        <end position="34"/>
    </location>
</feature>
<feature type="helix" evidence="7">
    <location>
        <begin position="38"/>
        <end position="53"/>
    </location>
</feature>
<feature type="turn" evidence="7">
    <location>
        <begin position="54"/>
        <end position="59"/>
    </location>
</feature>
<feature type="helix" evidence="7">
    <location>
        <begin position="63"/>
        <end position="71"/>
    </location>
</feature>
<feature type="strand" evidence="7">
    <location>
        <begin position="73"/>
        <end position="76"/>
    </location>
</feature>
<feature type="helix" evidence="7">
    <location>
        <begin position="79"/>
        <end position="84"/>
    </location>
</feature>
<feature type="strand" evidence="7">
    <location>
        <begin position="86"/>
        <end position="90"/>
    </location>
</feature>
<feature type="helix" evidence="7">
    <location>
        <begin position="96"/>
        <end position="109"/>
    </location>
</feature>
<feature type="strand" evidence="7">
    <location>
        <begin position="115"/>
        <end position="118"/>
    </location>
</feature>
<feature type="strand" evidence="7">
    <location>
        <begin position="121"/>
        <end position="123"/>
    </location>
</feature>
<feature type="helix" evidence="7">
    <location>
        <begin position="125"/>
        <end position="128"/>
    </location>
</feature>
<feature type="turn" evidence="7">
    <location>
        <begin position="129"/>
        <end position="131"/>
    </location>
</feature>
<feature type="strand" evidence="7">
    <location>
        <begin position="132"/>
        <end position="134"/>
    </location>
</feature>
<feature type="helix" evidence="7">
    <location>
        <begin position="135"/>
        <end position="137"/>
    </location>
</feature>
<feature type="strand" evidence="7">
    <location>
        <begin position="138"/>
        <end position="143"/>
    </location>
</feature>
<feature type="turn" evidence="7">
    <location>
        <begin position="147"/>
        <end position="149"/>
    </location>
</feature>
<feature type="strand" evidence="7">
    <location>
        <begin position="152"/>
        <end position="157"/>
    </location>
</feature>
<feature type="helix" evidence="7">
    <location>
        <begin position="163"/>
        <end position="175"/>
    </location>
</feature>
<feature type="strand" evidence="7">
    <location>
        <begin position="179"/>
        <end position="185"/>
    </location>
</feature>
<feature type="turn" evidence="7">
    <location>
        <begin position="187"/>
        <end position="190"/>
    </location>
</feature>
<feature type="helix" evidence="7">
    <location>
        <begin position="191"/>
        <end position="194"/>
    </location>
</feature>
<feature type="helix" evidence="7">
    <location>
        <begin position="196"/>
        <end position="207"/>
    </location>
</feature>
<feature type="helix" evidence="7">
    <location>
        <begin position="213"/>
        <end position="222"/>
    </location>
</feature>
<feature type="helix" evidence="7">
    <location>
        <begin position="230"/>
        <end position="237"/>
    </location>
</feature>
<feature type="helix" evidence="7">
    <location>
        <begin position="239"/>
        <end position="252"/>
    </location>
</feature>
<feature type="helix" evidence="7">
    <location>
        <begin position="257"/>
        <end position="259"/>
    </location>
</feature>
<feature type="helix" evidence="7">
    <location>
        <begin position="263"/>
        <end position="270"/>
    </location>
</feature>
<feature type="helix" evidence="7">
    <location>
        <begin position="276"/>
        <end position="278"/>
    </location>
</feature>
<feature type="strand" evidence="7">
    <location>
        <begin position="280"/>
        <end position="284"/>
    </location>
</feature>
<feature type="helix" evidence="7">
    <location>
        <begin position="300"/>
        <end position="302"/>
    </location>
</feature>
<feature type="strand" evidence="7">
    <location>
        <begin position="307"/>
        <end position="309"/>
    </location>
</feature>
<feature type="strand" evidence="7">
    <location>
        <begin position="314"/>
        <end position="317"/>
    </location>
</feature>
<feature type="strand" evidence="7">
    <location>
        <begin position="320"/>
        <end position="324"/>
    </location>
</feature>
<feature type="strand" evidence="7">
    <location>
        <begin position="326"/>
        <end position="328"/>
    </location>
</feature>
<feature type="helix" evidence="7">
    <location>
        <begin position="330"/>
        <end position="337"/>
    </location>
</feature>
<feature type="strand" evidence="7">
    <location>
        <begin position="341"/>
        <end position="345"/>
    </location>
</feature>
<feature type="strand" evidence="7">
    <location>
        <begin position="348"/>
        <end position="356"/>
    </location>
</feature>
<feature type="helix" evidence="7">
    <location>
        <begin position="362"/>
        <end position="373"/>
    </location>
</feature>
<feature type="turn" evidence="7">
    <location>
        <begin position="374"/>
        <end position="376"/>
    </location>
</feature>
<feature type="strand" evidence="7">
    <location>
        <begin position="378"/>
        <end position="381"/>
    </location>
</feature>
<feature type="turn" evidence="7">
    <location>
        <begin position="386"/>
        <end position="389"/>
    </location>
</feature>
<feature type="helix" evidence="7">
    <location>
        <begin position="390"/>
        <end position="406"/>
    </location>
</feature>
<feature type="helix" evidence="7">
    <location>
        <begin position="412"/>
        <end position="422"/>
    </location>
</feature>
<feature type="helix" evidence="7">
    <location>
        <begin position="429"/>
        <end position="436"/>
    </location>
</feature>
<feature type="helix" evidence="7">
    <location>
        <begin position="438"/>
        <end position="452"/>
    </location>
</feature>
<feature type="helix" evidence="7">
    <location>
        <begin position="455"/>
        <end position="457"/>
    </location>
</feature>
<feature type="helix" evidence="7">
    <location>
        <begin position="461"/>
        <end position="470"/>
    </location>
</feature>